<gene>
    <name type="primary">Bcat2</name>
    <name type="synonym">Bcatm</name>
    <name type="synonym">Eca40</name>
</gene>
<feature type="transit peptide" description="Mitochondrion" evidence="4">
    <location>
        <begin position="1"/>
        <end position="27"/>
    </location>
</feature>
<feature type="chain" id="PRO_0000001274" description="Branched-chain-amino-acid aminotransferase, mitochondrial">
    <location>
        <begin position="28"/>
        <end position="393"/>
    </location>
</feature>
<feature type="binding site" evidence="1">
    <location>
        <position position="169"/>
    </location>
    <ligand>
        <name>substrate</name>
    </ligand>
</feature>
<feature type="modified residue" description="N6-(pyridoxal phosphate)lysine" evidence="1">
    <location>
        <position position="230"/>
    </location>
</feature>
<feature type="modified residue" description="N6-acetyllysine" evidence="1">
    <location>
        <position position="322"/>
    </location>
</feature>
<accession>O35854</accession>
<comment type="function">
    <text evidence="2 3 4">Catalyzes the first reaction in the catabolism of the essential branched chain amino acids leucine, isoleucine, and valine (PubMed:9165094, PubMed:8381418). May also function as a transporter of branched chain alpha-keto acids (PubMed:8428987).</text>
</comment>
<comment type="catalytic activity">
    <reaction evidence="2 4">
        <text>L-leucine + 2-oxoglutarate = 4-methyl-2-oxopentanoate + L-glutamate</text>
        <dbReference type="Rhea" id="RHEA:18321"/>
        <dbReference type="ChEBI" id="CHEBI:16810"/>
        <dbReference type="ChEBI" id="CHEBI:17865"/>
        <dbReference type="ChEBI" id="CHEBI:29985"/>
        <dbReference type="ChEBI" id="CHEBI:57427"/>
        <dbReference type="EC" id="2.6.1.42"/>
    </reaction>
    <physiologicalReaction direction="left-to-right" evidence="2">
        <dbReference type="Rhea" id="RHEA:18322"/>
    </physiologicalReaction>
</comment>
<comment type="catalytic activity">
    <reaction evidence="2 4">
        <text>L-isoleucine + 2-oxoglutarate = (S)-3-methyl-2-oxopentanoate + L-glutamate</text>
        <dbReference type="Rhea" id="RHEA:24801"/>
        <dbReference type="ChEBI" id="CHEBI:16810"/>
        <dbReference type="ChEBI" id="CHEBI:29985"/>
        <dbReference type="ChEBI" id="CHEBI:35146"/>
        <dbReference type="ChEBI" id="CHEBI:58045"/>
        <dbReference type="EC" id="2.6.1.42"/>
    </reaction>
    <physiologicalReaction direction="left-to-right" evidence="2">
        <dbReference type="Rhea" id="RHEA:24802"/>
    </physiologicalReaction>
</comment>
<comment type="catalytic activity">
    <reaction evidence="2 4">
        <text>L-valine + 2-oxoglutarate = 3-methyl-2-oxobutanoate + L-glutamate</text>
        <dbReference type="Rhea" id="RHEA:24813"/>
        <dbReference type="ChEBI" id="CHEBI:11851"/>
        <dbReference type="ChEBI" id="CHEBI:16810"/>
        <dbReference type="ChEBI" id="CHEBI:29985"/>
        <dbReference type="ChEBI" id="CHEBI:57762"/>
        <dbReference type="EC" id="2.6.1.42"/>
    </reaction>
    <physiologicalReaction direction="left-to-right" evidence="2">
        <dbReference type="Rhea" id="RHEA:24814"/>
    </physiologicalReaction>
</comment>
<comment type="cofactor">
    <cofactor evidence="2">
        <name>pyridoxal 5'-phosphate</name>
        <dbReference type="ChEBI" id="CHEBI:597326"/>
    </cofactor>
</comment>
<comment type="biophysicochemical properties">
    <kinetics>
        <KM evidence="2">1 mM for L-leucine</KM>
        <KM evidence="2">1 mM for L-isoleucine</KM>
        <KM evidence="2">5 mM for L-valine</KM>
    </kinetics>
</comment>
<comment type="subunit">
    <text evidence="1">Homodimer.</text>
</comment>
<comment type="subcellular location">
    <subcellularLocation>
        <location evidence="2 4">Mitochondrion</location>
    </subcellularLocation>
</comment>
<comment type="tissue specificity">
    <text evidence="4">Expressed in all tissues.</text>
</comment>
<comment type="similarity">
    <text evidence="5">Belongs to the class-IV pyridoxal-phosphate-dependent aminotransferase family.</text>
</comment>
<sequence length="393" mass="44276">MSAAILGQVWTRKLLPIPWRLCVPGRCVSSNFKAADLQVQVTREPQKKPAPSQPLLFGKTFTDHMLMVEWNSKTGWGPPRIQPFQNLTLHPACSGLHYSLQLFEGLKAYKGRDKQVRLFRPWLNMDRMLRSARRLCLPDFDKQELLECIRQLIEVDKDWVPDGNGTSLYVRPVLIGNEPSLGVGMVTQALLFVILCPVGSYFPGDSMTPVSLLADPSFVRAWIGGVGDCKLGGNYGPTVAVQQEAQKKGCEQVLWLYGPDHQLTEVGTMNIFVYWTHEDGELELATPPLDGIILPGVVRQSLLDLARTWGEFRVAERKVTMKELKRALEEGRVREVFGSGTACQVCPVHQILYEGKQLHIPTMENGPELILRFQKELKAIQYGTSAHDWMLRV</sequence>
<reference key="1">
    <citation type="journal article" date="1997" name="Biochim. Biophys. Acta">
        <title>Cloning of the rat and human mitochondrial branched chain aminotransferases (BCATm).</title>
        <authorList>
            <person name="Bledsoe R.K."/>
            <person name="Dawson P.A."/>
            <person name="Hutson S.M."/>
        </authorList>
    </citation>
    <scope>NUCLEOTIDE SEQUENCE [MRNA]</scope>
    <scope>PARTIAL PROTEIN SEQUENCE</scope>
    <scope>FUNCTION</scope>
    <scope>CATALYTIC ACTIVITY</scope>
    <scope>SUBCELLULAR LOCATION</scope>
    <scope>TISSUE SPECIFICITY</scope>
    <source>
        <strain>Sprague-Dawley</strain>
        <tissue>Heart</tissue>
    </source>
</reference>
<reference key="2">
    <citation type="journal article" date="1993" name="J. Biol. Chem.">
        <title>Identification of the mitochondrial branched chain aminotransferase as a branched chain alpha-keto acid transport protein.</title>
        <authorList>
            <person name="Hutson S.M."/>
            <person name="Hall T.R."/>
        </authorList>
    </citation>
    <scope>FUNCTION</scope>
</reference>
<reference key="3">
    <citation type="journal article" date="2012" name="Nat. Commun.">
        <title>Quantitative maps of protein phosphorylation sites across 14 different rat organs and tissues.</title>
        <authorList>
            <person name="Lundby A."/>
            <person name="Secher A."/>
            <person name="Lage K."/>
            <person name="Nordsborg N.B."/>
            <person name="Dmytriyev A."/>
            <person name="Lundby C."/>
            <person name="Olsen J.V."/>
        </authorList>
    </citation>
    <scope>IDENTIFICATION BY MASS SPECTROMETRY [LARGE SCALE ANALYSIS]</scope>
</reference>
<reference key="4">
    <citation type="journal article" date="1993" name="J. Biol. Chem.">
        <title>Branched chain aminotransferase isoenzymes. Purification and characterization of the rat brain isoenzyme.</title>
        <authorList>
            <person name="Hall T.R."/>
            <person name="Wallin R."/>
            <person name="Reinhart G.D."/>
            <person name="Hutson S.M."/>
        </authorList>
    </citation>
    <scope>FUNCTION</scope>
    <scope>CATALYTIC ACTIVITY</scope>
    <scope>COFACTOR</scope>
    <scope>SUBCELLULAR LOCATION</scope>
</reference>
<name>BCAT2_RAT</name>
<organism>
    <name type="scientific">Rattus norvegicus</name>
    <name type="common">Rat</name>
    <dbReference type="NCBI Taxonomy" id="10116"/>
    <lineage>
        <taxon>Eukaryota</taxon>
        <taxon>Metazoa</taxon>
        <taxon>Chordata</taxon>
        <taxon>Craniata</taxon>
        <taxon>Vertebrata</taxon>
        <taxon>Euteleostomi</taxon>
        <taxon>Mammalia</taxon>
        <taxon>Eutheria</taxon>
        <taxon>Euarchontoglires</taxon>
        <taxon>Glires</taxon>
        <taxon>Rodentia</taxon>
        <taxon>Myomorpha</taxon>
        <taxon>Muroidea</taxon>
        <taxon>Muridae</taxon>
        <taxon>Murinae</taxon>
        <taxon>Rattus</taxon>
    </lineage>
</organism>
<proteinExistence type="evidence at protein level"/>
<keyword id="KW-0007">Acetylation</keyword>
<keyword id="KW-0028">Amino-acid biosynthesis</keyword>
<keyword id="KW-0032">Aminotransferase</keyword>
<keyword id="KW-0100">Branched-chain amino acid biosynthesis</keyword>
<keyword id="KW-0903">Direct protein sequencing</keyword>
<keyword id="KW-0443">Lipid metabolism</keyword>
<keyword id="KW-0496">Mitochondrion</keyword>
<keyword id="KW-0663">Pyridoxal phosphate</keyword>
<keyword id="KW-1185">Reference proteome</keyword>
<keyword id="KW-0808">Transferase</keyword>
<keyword id="KW-0809">Transit peptide</keyword>
<evidence type="ECO:0000250" key="1">
    <source>
        <dbReference type="UniProtKB" id="O15382"/>
    </source>
</evidence>
<evidence type="ECO:0000269" key="2">
    <source>
    </source>
</evidence>
<evidence type="ECO:0000269" key="3">
    <source>
    </source>
</evidence>
<evidence type="ECO:0000269" key="4">
    <source>
    </source>
</evidence>
<evidence type="ECO:0000305" key="5"/>
<dbReference type="EC" id="2.6.1.42" evidence="2 4"/>
<dbReference type="EMBL" id="U68417">
    <property type="protein sequence ID" value="AAB67673.1"/>
    <property type="molecule type" value="mRNA"/>
</dbReference>
<dbReference type="RefSeq" id="NP_071795.1">
    <property type="nucleotide sequence ID" value="NM_022400.1"/>
</dbReference>
<dbReference type="SMR" id="O35854"/>
<dbReference type="FunCoup" id="O35854">
    <property type="interactions" value="1746"/>
</dbReference>
<dbReference type="IntAct" id="O35854">
    <property type="interactions" value="1"/>
</dbReference>
<dbReference type="STRING" id="10116.ENSRNOP00000028474"/>
<dbReference type="BindingDB" id="O35854"/>
<dbReference type="ChEMBL" id="CHEMBL3319"/>
<dbReference type="GlyGen" id="O35854">
    <property type="glycosylation" value="1 site"/>
</dbReference>
<dbReference type="iPTMnet" id="O35854"/>
<dbReference type="PhosphoSitePlus" id="O35854"/>
<dbReference type="SwissPalm" id="O35854"/>
<dbReference type="jPOST" id="O35854"/>
<dbReference type="PaxDb" id="10116-ENSRNOP00000028474"/>
<dbReference type="GeneID" id="64203"/>
<dbReference type="KEGG" id="rno:64203"/>
<dbReference type="UCSC" id="RGD:68948">
    <property type="organism name" value="rat"/>
</dbReference>
<dbReference type="AGR" id="RGD:68948"/>
<dbReference type="CTD" id="587"/>
<dbReference type="RGD" id="68948">
    <property type="gene designation" value="Bcat2"/>
</dbReference>
<dbReference type="eggNOG" id="KOG0975">
    <property type="taxonomic scope" value="Eukaryota"/>
</dbReference>
<dbReference type="InParanoid" id="O35854"/>
<dbReference type="PhylomeDB" id="O35854"/>
<dbReference type="Reactome" id="R-RNO-70895">
    <property type="pathway name" value="Branched-chain amino acid catabolism"/>
</dbReference>
<dbReference type="SABIO-RK" id="O35854"/>
<dbReference type="PRO" id="PR:O35854"/>
<dbReference type="Proteomes" id="UP000002494">
    <property type="component" value="Unplaced"/>
</dbReference>
<dbReference type="GO" id="GO:0005739">
    <property type="term" value="C:mitochondrion"/>
    <property type="evidence" value="ECO:0000314"/>
    <property type="project" value="UniProtKB"/>
</dbReference>
<dbReference type="GO" id="GO:0004084">
    <property type="term" value="F:branched-chain-amino-acid transaminase activity"/>
    <property type="evidence" value="ECO:0000314"/>
    <property type="project" value="RGD"/>
</dbReference>
<dbReference type="GO" id="GO:0052656">
    <property type="term" value="F:L-isoleucine-2-oxoglutarate transaminase activity"/>
    <property type="evidence" value="ECO:0000314"/>
    <property type="project" value="UniProtKB"/>
</dbReference>
<dbReference type="GO" id="GO:0052654">
    <property type="term" value="F:L-leucine-2-oxoglutarate transaminase activity"/>
    <property type="evidence" value="ECO:0000314"/>
    <property type="project" value="UniProtKB"/>
</dbReference>
<dbReference type="GO" id="GO:0052655">
    <property type="term" value="F:L-valine-2-oxoglutarate transaminase activity"/>
    <property type="evidence" value="ECO:0000314"/>
    <property type="project" value="UniProtKB"/>
</dbReference>
<dbReference type="GO" id="GO:0009083">
    <property type="term" value="P:branched-chain amino acid catabolic process"/>
    <property type="evidence" value="ECO:0000314"/>
    <property type="project" value="RGD"/>
</dbReference>
<dbReference type="GO" id="GO:0009081">
    <property type="term" value="P:branched-chain amino acid metabolic process"/>
    <property type="evidence" value="ECO:0000266"/>
    <property type="project" value="RGD"/>
</dbReference>
<dbReference type="GO" id="GO:1990830">
    <property type="term" value="P:cellular response to leukemia inhibitory factor"/>
    <property type="evidence" value="ECO:0000266"/>
    <property type="project" value="RGD"/>
</dbReference>
<dbReference type="GO" id="GO:0006550">
    <property type="term" value="P:isoleucine catabolic process"/>
    <property type="evidence" value="ECO:0000314"/>
    <property type="project" value="RGD"/>
</dbReference>
<dbReference type="GO" id="GO:0006549">
    <property type="term" value="P:isoleucine metabolic process"/>
    <property type="evidence" value="ECO:0000266"/>
    <property type="project" value="RGD"/>
</dbReference>
<dbReference type="GO" id="GO:0009098">
    <property type="term" value="P:L-leucine biosynthetic process"/>
    <property type="evidence" value="ECO:0000318"/>
    <property type="project" value="GO_Central"/>
</dbReference>
<dbReference type="GO" id="GO:0006551">
    <property type="term" value="P:L-leucine metabolic process"/>
    <property type="evidence" value="ECO:0000266"/>
    <property type="project" value="RGD"/>
</dbReference>
<dbReference type="GO" id="GO:0009099">
    <property type="term" value="P:L-valine biosynthetic process"/>
    <property type="evidence" value="ECO:0000318"/>
    <property type="project" value="GO_Central"/>
</dbReference>
<dbReference type="GO" id="GO:0007595">
    <property type="term" value="P:lactation"/>
    <property type="evidence" value="ECO:0000270"/>
    <property type="project" value="RGD"/>
</dbReference>
<dbReference type="GO" id="GO:0006629">
    <property type="term" value="P:lipid metabolic process"/>
    <property type="evidence" value="ECO:0007669"/>
    <property type="project" value="UniProtKB-KW"/>
</dbReference>
<dbReference type="GO" id="GO:0010817">
    <property type="term" value="P:regulation of hormone levels"/>
    <property type="evidence" value="ECO:0000266"/>
    <property type="project" value="RGD"/>
</dbReference>
<dbReference type="GO" id="GO:0006573">
    <property type="term" value="P:valine metabolic process"/>
    <property type="evidence" value="ECO:0000266"/>
    <property type="project" value="RGD"/>
</dbReference>
<dbReference type="CDD" id="cd01557">
    <property type="entry name" value="BCAT_beta_family"/>
    <property type="match status" value="1"/>
</dbReference>
<dbReference type="FunFam" id="3.30.470.10:FF:000002">
    <property type="entry name" value="Branched-chain-amino-acid aminotransferase"/>
    <property type="match status" value="1"/>
</dbReference>
<dbReference type="FunFam" id="3.20.10.10:FF:000007">
    <property type="entry name" value="Branched-chain-amino-acid aminotransferase, mitochondrial"/>
    <property type="match status" value="1"/>
</dbReference>
<dbReference type="Gene3D" id="3.30.470.10">
    <property type="match status" value="1"/>
</dbReference>
<dbReference type="Gene3D" id="3.20.10.10">
    <property type="entry name" value="D-amino Acid Aminotransferase, subunit A, domain 2"/>
    <property type="match status" value="1"/>
</dbReference>
<dbReference type="InterPro" id="IPR001544">
    <property type="entry name" value="Aminotrans_IV"/>
</dbReference>
<dbReference type="InterPro" id="IPR018300">
    <property type="entry name" value="Aminotrans_IV_CS"/>
</dbReference>
<dbReference type="InterPro" id="IPR036038">
    <property type="entry name" value="Aminotransferase-like"/>
</dbReference>
<dbReference type="InterPro" id="IPR005786">
    <property type="entry name" value="B_amino_transII"/>
</dbReference>
<dbReference type="InterPro" id="IPR043132">
    <property type="entry name" value="BCAT-like_C"/>
</dbReference>
<dbReference type="InterPro" id="IPR043131">
    <property type="entry name" value="BCAT-like_N"/>
</dbReference>
<dbReference type="InterPro" id="IPR033939">
    <property type="entry name" value="BCAT_family"/>
</dbReference>
<dbReference type="NCBIfam" id="TIGR01123">
    <property type="entry name" value="ilvE_II"/>
    <property type="match status" value="1"/>
</dbReference>
<dbReference type="NCBIfam" id="NF009897">
    <property type="entry name" value="PRK13357.1"/>
    <property type="match status" value="1"/>
</dbReference>
<dbReference type="PANTHER" id="PTHR11825:SF39">
    <property type="entry name" value="BRANCHED-CHAIN-AMINO-ACID AMINOTRANSFERASE, MITOCHONDRIAL"/>
    <property type="match status" value="1"/>
</dbReference>
<dbReference type="PANTHER" id="PTHR11825">
    <property type="entry name" value="SUBGROUP IIII AMINOTRANSFERASE"/>
    <property type="match status" value="1"/>
</dbReference>
<dbReference type="Pfam" id="PF01063">
    <property type="entry name" value="Aminotran_4"/>
    <property type="match status" value="1"/>
</dbReference>
<dbReference type="PIRSF" id="PIRSF006468">
    <property type="entry name" value="BCAT1"/>
    <property type="match status" value="1"/>
</dbReference>
<dbReference type="SUPFAM" id="SSF56752">
    <property type="entry name" value="D-aminoacid aminotransferase-like PLP-dependent enzymes"/>
    <property type="match status" value="1"/>
</dbReference>
<dbReference type="PROSITE" id="PS00770">
    <property type="entry name" value="AA_TRANSFER_CLASS_4"/>
    <property type="match status" value="1"/>
</dbReference>
<protein>
    <recommendedName>
        <fullName>Branched-chain-amino-acid aminotransferase, mitochondrial</fullName>
        <shortName>BCAT(m)</shortName>
        <ecNumber evidence="2 4">2.6.1.42</ecNumber>
    </recommendedName>
</protein>